<comment type="subcellular location">
    <subcellularLocation>
        <location evidence="5">Postsynaptic cell membrane</location>
        <topology evidence="5">Multi-pass membrane protein</topology>
    </subcellularLocation>
    <subcellularLocation>
        <location evidence="5">Cell membrane</location>
        <topology evidence="5">Multi-pass membrane protein</topology>
    </subcellularLocation>
</comment>
<comment type="tissue specificity">
    <text evidence="4">Expressed in the liver, olfactory mucosa, pituitary gland, hair cells of the saccule and spleen.</text>
</comment>
<comment type="similarity">
    <text evidence="5">Belongs to the ligand-gated ion channel (TC 1.A.9) family. Acetylcholine receptor (TC 1.A.9.1) subfamily.</text>
</comment>
<feature type="signal peptide" evidence="2">
    <location>
        <begin position="1"/>
        <end position="19"/>
    </location>
</feature>
<feature type="chain" id="PRO_0000000374" description="Neuronal acetylcholine receptor subunit alpha-9-I">
    <location>
        <begin position="20"/>
        <end position="572"/>
    </location>
</feature>
<feature type="topological domain" description="Extracellular" evidence="2">
    <location>
        <begin position="20"/>
        <end position="232"/>
    </location>
</feature>
<feature type="transmembrane region" description="Helical" evidence="2">
    <location>
        <begin position="233"/>
        <end position="253"/>
    </location>
</feature>
<feature type="transmembrane region" description="Helical" evidence="2">
    <location>
        <begin position="263"/>
        <end position="283"/>
    </location>
</feature>
<feature type="transmembrane region" description="Helical" evidence="2">
    <location>
        <begin position="297"/>
        <end position="317"/>
    </location>
</feature>
<feature type="topological domain" description="Cytoplasmic" evidence="2">
    <location>
        <begin position="318"/>
        <end position="550"/>
    </location>
</feature>
<feature type="transmembrane region" description="Helical" evidence="2">
    <location>
        <begin position="551"/>
        <end position="571"/>
    </location>
</feature>
<feature type="region of interest" description="Disordered" evidence="3">
    <location>
        <begin position="405"/>
        <end position="458"/>
    </location>
</feature>
<feature type="compositionally biased region" description="Low complexity" evidence="3">
    <location>
        <begin position="435"/>
        <end position="447"/>
    </location>
</feature>
<feature type="glycosylation site" description="N-linked (GlcNAc...) asparagine" evidence="2">
    <location>
        <position position="51"/>
    </location>
</feature>
<feature type="glycosylation site" description="N-linked (GlcNAc...) asparagine" evidence="2">
    <location>
        <position position="164"/>
    </location>
</feature>
<feature type="disulfide bond" evidence="1">
    <location>
        <begin position="149"/>
        <end position="163"/>
    </location>
</feature>
<feature type="disulfide bond" description="Associated with receptor activation" evidence="1">
    <location>
        <begin position="213"/>
        <end position="214"/>
    </location>
</feature>
<accession>Q8JFN7</accession>
<sequence length="572" mass="65590">MKTVVLLTWISCWIDVCTSAQGRYAQKLLNDLMENYSSALRPVEDTDKTLNVTLQITLSQIKDMDERNQVLTTYLWIRQTWFDAYLKWDKEEYDGLEVIRIPSNLVWRPDIVLYNKADEEASGPADTNVVLRYNGEITWDMPAITKSSCVVDVSYFPFDWQWCNLTFGSWTYNGNQVDIAMGMDSGDLSDFVENVEWECHGMPAVRNVIMYGCCSDPYPDITYTLHLKRRSLFYIFNLLLPCFLISFLAPLGFYLPADSGEKVSLGVTVLLALTVFQLMVAESMPPSESVPYIGKYYIATMTMITASTSLTIFIMNIHFCGAEAKPVPHWAKVLIIDYMSKILFVYEVGENCTTPESERTPLYSEEPMSGNSALARNHYHDDLYHDGGCYQDDCHRLRPYQYGNGHLQNHHSTHQNHLDNCRYANGGHRDDHYSNRSNQNHHSNRSQTSKGEGGEEKREPLRHYHHIGREELDYQAPPPGNLQNGGLNEPLPYPKEKHLNPASAPACSCPCPHHKQVVYNIQYIANCFREQRATCAKGAEWKKVAKVMDRFFMWIFFIMVFLMSILIIGKAT</sequence>
<gene>
    <name type="primary">nachra9</name>
</gene>
<reference key="1">
    <citation type="journal article" date="2004" name="Neuroscience">
        <title>Cloning and characterization of alpha9 subunits of the nicotinic acetylcholine receptor expressed by saccular hair cells of the rainbow trout (Oncorhynchus mykiss).</title>
        <authorList>
            <person name="Drescher D.G."/>
            <person name="Ramakrishnan N.A."/>
            <person name="Drescher M.J."/>
            <person name="Chun W."/>
            <person name="Wang X."/>
            <person name="Myers S.F."/>
            <person name="Green G.E."/>
            <person name="Sadrazodi K."/>
            <person name="Karadaghy A.A."/>
            <person name="Poopat N."/>
            <person name="Karpenko A.N."/>
            <person name="Khan K.M."/>
            <person name="Hatfield J.S."/>
        </authorList>
    </citation>
    <scope>NUCLEOTIDE SEQUENCE [MRNA]</scope>
    <scope>TISSUE SPECIFICITY</scope>
    <source>
        <tissue>Saccule</tissue>
    </source>
</reference>
<dbReference type="EMBL" id="AY037940">
    <property type="protein sequence ID" value="AAK72491.1"/>
    <property type="molecule type" value="mRNA"/>
</dbReference>
<dbReference type="RefSeq" id="NP_001117911.1">
    <property type="nucleotide sequence ID" value="NM_001124439.1"/>
</dbReference>
<dbReference type="SMR" id="Q8JFN7"/>
<dbReference type="GlyCosmos" id="Q8JFN7">
    <property type="glycosylation" value="2 sites, No reported glycans"/>
</dbReference>
<dbReference type="GeneID" id="100136152"/>
<dbReference type="KEGG" id="omy:100136152"/>
<dbReference type="CTD" id="24596487"/>
<dbReference type="OrthoDB" id="5975154at2759"/>
<dbReference type="Proteomes" id="UP000694395">
    <property type="component" value="Unplaced"/>
</dbReference>
<dbReference type="GO" id="GO:0045211">
    <property type="term" value="C:postsynaptic membrane"/>
    <property type="evidence" value="ECO:0007669"/>
    <property type="project" value="UniProtKB-SubCell"/>
</dbReference>
<dbReference type="GO" id="GO:0022848">
    <property type="term" value="F:acetylcholine-gated monoatomic cation-selective channel activity"/>
    <property type="evidence" value="ECO:0007669"/>
    <property type="project" value="InterPro"/>
</dbReference>
<dbReference type="GO" id="GO:0004888">
    <property type="term" value="F:transmembrane signaling receptor activity"/>
    <property type="evidence" value="ECO:0007669"/>
    <property type="project" value="InterPro"/>
</dbReference>
<dbReference type="CDD" id="cd19022">
    <property type="entry name" value="LGIC_ECD_nAChR_A9"/>
    <property type="match status" value="1"/>
</dbReference>
<dbReference type="CDD" id="cd19051">
    <property type="entry name" value="LGIC_TM_cation"/>
    <property type="match status" value="1"/>
</dbReference>
<dbReference type="FunFam" id="1.20.58.390:FF:000009">
    <property type="entry name" value="Cholinergic receptor nicotinic alpha 9 subunit"/>
    <property type="match status" value="1"/>
</dbReference>
<dbReference type="FunFam" id="1.20.58.390:FF:000053">
    <property type="entry name" value="Neuronal acetylcholine receptor subunit alpha-9"/>
    <property type="match status" value="1"/>
</dbReference>
<dbReference type="FunFam" id="2.70.170.10:FF:000010">
    <property type="entry name" value="neuronal acetylcholine receptor subunit alpha-9"/>
    <property type="match status" value="1"/>
</dbReference>
<dbReference type="Gene3D" id="2.70.170.10">
    <property type="entry name" value="Neurotransmitter-gated ion-channel ligand-binding domain"/>
    <property type="match status" value="1"/>
</dbReference>
<dbReference type="Gene3D" id="1.20.58.390">
    <property type="entry name" value="Neurotransmitter-gated ion-channel transmembrane domain"/>
    <property type="match status" value="2"/>
</dbReference>
<dbReference type="InterPro" id="IPR006202">
    <property type="entry name" value="Neur_chan_lig-bd"/>
</dbReference>
<dbReference type="InterPro" id="IPR036734">
    <property type="entry name" value="Neur_chan_lig-bd_sf"/>
</dbReference>
<dbReference type="InterPro" id="IPR006201">
    <property type="entry name" value="Neur_channel"/>
</dbReference>
<dbReference type="InterPro" id="IPR036719">
    <property type="entry name" value="Neuro-gated_channel_TM_sf"/>
</dbReference>
<dbReference type="InterPro" id="IPR038050">
    <property type="entry name" value="Neuro_actylchol_rec"/>
</dbReference>
<dbReference type="InterPro" id="IPR006029">
    <property type="entry name" value="Neurotrans-gated_channel_TM"/>
</dbReference>
<dbReference type="InterPro" id="IPR018000">
    <property type="entry name" value="Neurotransmitter_ion_chnl_CS"/>
</dbReference>
<dbReference type="InterPro" id="IPR002394">
    <property type="entry name" value="Nicotinic_acetylcholine_rcpt"/>
</dbReference>
<dbReference type="NCBIfam" id="TIGR00860">
    <property type="entry name" value="LIC"/>
    <property type="match status" value="1"/>
</dbReference>
<dbReference type="PANTHER" id="PTHR18945">
    <property type="entry name" value="NEUROTRANSMITTER GATED ION CHANNEL"/>
    <property type="match status" value="1"/>
</dbReference>
<dbReference type="Pfam" id="PF02931">
    <property type="entry name" value="Neur_chan_LBD"/>
    <property type="match status" value="1"/>
</dbReference>
<dbReference type="Pfam" id="PF02932">
    <property type="entry name" value="Neur_chan_memb"/>
    <property type="match status" value="1"/>
</dbReference>
<dbReference type="PRINTS" id="PR00254">
    <property type="entry name" value="NICOTINICR"/>
</dbReference>
<dbReference type="PRINTS" id="PR00252">
    <property type="entry name" value="NRIONCHANNEL"/>
</dbReference>
<dbReference type="SUPFAM" id="SSF90112">
    <property type="entry name" value="Neurotransmitter-gated ion-channel transmembrane pore"/>
    <property type="match status" value="1"/>
</dbReference>
<dbReference type="SUPFAM" id="SSF63712">
    <property type="entry name" value="Nicotinic receptor ligand binding domain-like"/>
    <property type="match status" value="1"/>
</dbReference>
<dbReference type="PROSITE" id="PS00236">
    <property type="entry name" value="NEUROTR_ION_CHANNEL"/>
    <property type="match status" value="1"/>
</dbReference>
<evidence type="ECO:0000250" key="1"/>
<evidence type="ECO:0000255" key="2"/>
<evidence type="ECO:0000256" key="3">
    <source>
        <dbReference type="SAM" id="MobiDB-lite"/>
    </source>
</evidence>
<evidence type="ECO:0000269" key="4">
    <source>
    </source>
</evidence>
<evidence type="ECO:0000305" key="5"/>
<protein>
    <recommendedName>
        <fullName>Neuronal acetylcholine receptor subunit alpha-9-I</fullName>
    </recommendedName>
    <alternativeName>
        <fullName>Nicotinic acetylcholine receptor subunit alpha-9-I</fullName>
        <shortName>NACHR alpha-9-I</shortName>
    </alternativeName>
</protein>
<name>ACH91_ONCMY</name>
<proteinExistence type="evidence at transcript level"/>
<keyword id="KW-1003">Cell membrane</keyword>
<keyword id="KW-1015">Disulfide bond</keyword>
<keyword id="KW-0325">Glycoprotein</keyword>
<keyword id="KW-0407">Ion channel</keyword>
<keyword id="KW-0406">Ion transport</keyword>
<keyword id="KW-1071">Ligand-gated ion channel</keyword>
<keyword id="KW-0472">Membrane</keyword>
<keyword id="KW-0628">Postsynaptic cell membrane</keyword>
<keyword id="KW-0675">Receptor</keyword>
<keyword id="KW-0732">Signal</keyword>
<keyword id="KW-0770">Synapse</keyword>
<keyword id="KW-0812">Transmembrane</keyword>
<keyword id="KW-1133">Transmembrane helix</keyword>
<keyword id="KW-0813">Transport</keyword>
<organism>
    <name type="scientific">Oncorhynchus mykiss</name>
    <name type="common">Rainbow trout</name>
    <name type="synonym">Salmo gairdneri</name>
    <dbReference type="NCBI Taxonomy" id="8022"/>
    <lineage>
        <taxon>Eukaryota</taxon>
        <taxon>Metazoa</taxon>
        <taxon>Chordata</taxon>
        <taxon>Craniata</taxon>
        <taxon>Vertebrata</taxon>
        <taxon>Euteleostomi</taxon>
        <taxon>Actinopterygii</taxon>
        <taxon>Neopterygii</taxon>
        <taxon>Teleostei</taxon>
        <taxon>Protacanthopterygii</taxon>
        <taxon>Salmoniformes</taxon>
        <taxon>Salmonidae</taxon>
        <taxon>Salmoninae</taxon>
        <taxon>Oncorhynchus</taxon>
    </lineage>
</organism>